<gene>
    <name evidence="2" type="primary">infB</name>
    <name type="ordered locus">MMOB1520</name>
</gene>
<organism>
    <name type="scientific">Mycoplasma mobile (strain ATCC 43663 / 163K / NCTC 11711)</name>
    <name type="common">Mesomycoplasma mobile</name>
    <dbReference type="NCBI Taxonomy" id="267748"/>
    <lineage>
        <taxon>Bacteria</taxon>
        <taxon>Bacillati</taxon>
        <taxon>Mycoplasmatota</taxon>
        <taxon>Mycoplasmoidales</taxon>
        <taxon>Metamycoplasmataceae</taxon>
        <taxon>Mesomycoplasma</taxon>
    </lineage>
</organism>
<evidence type="ECO:0000250" key="1"/>
<evidence type="ECO:0000255" key="2">
    <source>
        <dbReference type="HAMAP-Rule" id="MF_00100"/>
    </source>
</evidence>
<feature type="chain" id="PRO_0000232588" description="Translation initiation factor IF-2">
    <location>
        <begin position="1"/>
        <end position="600"/>
    </location>
</feature>
<feature type="domain" description="tr-type G">
    <location>
        <begin position="112"/>
        <end position="279"/>
    </location>
</feature>
<feature type="region of interest" description="G1" evidence="1">
    <location>
        <begin position="121"/>
        <end position="128"/>
    </location>
</feature>
<feature type="region of interest" description="G2" evidence="1">
    <location>
        <begin position="146"/>
        <end position="150"/>
    </location>
</feature>
<feature type="region of interest" description="G3" evidence="1">
    <location>
        <begin position="167"/>
        <end position="170"/>
    </location>
</feature>
<feature type="region of interest" description="G4" evidence="1">
    <location>
        <begin position="221"/>
        <end position="224"/>
    </location>
</feature>
<feature type="region of interest" description="G5" evidence="1">
    <location>
        <begin position="257"/>
        <end position="259"/>
    </location>
</feature>
<feature type="binding site" evidence="2">
    <location>
        <begin position="121"/>
        <end position="128"/>
    </location>
    <ligand>
        <name>GTP</name>
        <dbReference type="ChEBI" id="CHEBI:37565"/>
    </ligand>
</feature>
<feature type="binding site" evidence="2">
    <location>
        <begin position="167"/>
        <end position="171"/>
    </location>
    <ligand>
        <name>GTP</name>
        <dbReference type="ChEBI" id="CHEBI:37565"/>
    </ligand>
</feature>
<feature type="binding site" evidence="2">
    <location>
        <begin position="221"/>
        <end position="224"/>
    </location>
    <ligand>
        <name>GTP</name>
        <dbReference type="ChEBI" id="CHEBI:37565"/>
    </ligand>
</feature>
<reference key="1">
    <citation type="journal article" date="2004" name="Genome Res.">
        <title>The complete genome and proteome of Mycoplasma mobile.</title>
        <authorList>
            <person name="Jaffe J.D."/>
            <person name="Stange-Thomann N."/>
            <person name="Smith C."/>
            <person name="DeCaprio D."/>
            <person name="Fisher S."/>
            <person name="Butler J."/>
            <person name="Calvo S."/>
            <person name="Elkins T."/>
            <person name="FitzGerald M.G."/>
            <person name="Hafez N."/>
            <person name="Kodira C.D."/>
            <person name="Major J."/>
            <person name="Wang S."/>
            <person name="Wilkinson J."/>
            <person name="Nicol R."/>
            <person name="Nusbaum C."/>
            <person name="Birren B."/>
            <person name="Berg H.C."/>
            <person name="Church G.M."/>
        </authorList>
    </citation>
    <scope>NUCLEOTIDE SEQUENCE [LARGE SCALE GENOMIC DNA]</scope>
    <source>
        <strain>ATCC 43663 / NCTC 11711 / 163 K</strain>
    </source>
</reference>
<name>IF2_MYCM1</name>
<dbReference type="EMBL" id="AE017308">
    <property type="protein sequence ID" value="AAT27638.1"/>
    <property type="molecule type" value="Genomic_DNA"/>
</dbReference>
<dbReference type="RefSeq" id="WP_011264672.1">
    <property type="nucleotide sequence ID" value="NC_006908.1"/>
</dbReference>
<dbReference type="SMR" id="Q6KID8"/>
<dbReference type="STRING" id="267748.MMOB1520"/>
<dbReference type="KEGG" id="mmo:MMOB1520"/>
<dbReference type="eggNOG" id="COG0532">
    <property type="taxonomic scope" value="Bacteria"/>
</dbReference>
<dbReference type="HOGENOM" id="CLU_006301_5_1_14"/>
<dbReference type="OrthoDB" id="9811804at2"/>
<dbReference type="Proteomes" id="UP000009072">
    <property type="component" value="Chromosome"/>
</dbReference>
<dbReference type="GO" id="GO:0005829">
    <property type="term" value="C:cytosol"/>
    <property type="evidence" value="ECO:0007669"/>
    <property type="project" value="TreeGrafter"/>
</dbReference>
<dbReference type="GO" id="GO:0005525">
    <property type="term" value="F:GTP binding"/>
    <property type="evidence" value="ECO:0007669"/>
    <property type="project" value="UniProtKB-KW"/>
</dbReference>
<dbReference type="GO" id="GO:0003924">
    <property type="term" value="F:GTPase activity"/>
    <property type="evidence" value="ECO:0007669"/>
    <property type="project" value="UniProtKB-UniRule"/>
</dbReference>
<dbReference type="GO" id="GO:0003743">
    <property type="term" value="F:translation initiation factor activity"/>
    <property type="evidence" value="ECO:0007669"/>
    <property type="project" value="UniProtKB-UniRule"/>
</dbReference>
<dbReference type="CDD" id="cd01887">
    <property type="entry name" value="IF2_eIF5B"/>
    <property type="match status" value="1"/>
</dbReference>
<dbReference type="CDD" id="cd03702">
    <property type="entry name" value="IF2_mtIF2_II"/>
    <property type="match status" value="1"/>
</dbReference>
<dbReference type="CDD" id="cd03692">
    <property type="entry name" value="mtIF2_IVc"/>
    <property type="match status" value="1"/>
</dbReference>
<dbReference type="FunFam" id="2.40.30.10:FF:000008">
    <property type="entry name" value="Translation initiation factor IF-2"/>
    <property type="match status" value="1"/>
</dbReference>
<dbReference type="FunFam" id="2.40.30.10:FF:000054">
    <property type="entry name" value="Translation initiation factor IF-2"/>
    <property type="match status" value="1"/>
</dbReference>
<dbReference type="FunFam" id="3.40.50.10050:FF:000001">
    <property type="entry name" value="Translation initiation factor IF-2"/>
    <property type="match status" value="1"/>
</dbReference>
<dbReference type="FunFam" id="3.40.50.300:FF:000019">
    <property type="entry name" value="Translation initiation factor IF-2"/>
    <property type="match status" value="1"/>
</dbReference>
<dbReference type="Gene3D" id="3.40.50.300">
    <property type="entry name" value="P-loop containing nucleotide triphosphate hydrolases"/>
    <property type="match status" value="1"/>
</dbReference>
<dbReference type="Gene3D" id="2.40.30.10">
    <property type="entry name" value="Translation factors"/>
    <property type="match status" value="2"/>
</dbReference>
<dbReference type="Gene3D" id="3.40.50.10050">
    <property type="entry name" value="Translation initiation factor IF- 2, domain 3"/>
    <property type="match status" value="1"/>
</dbReference>
<dbReference type="HAMAP" id="MF_00100_B">
    <property type="entry name" value="IF_2_B"/>
    <property type="match status" value="1"/>
</dbReference>
<dbReference type="InterPro" id="IPR053905">
    <property type="entry name" value="EF-G-like_DII"/>
</dbReference>
<dbReference type="InterPro" id="IPR044145">
    <property type="entry name" value="IF2_II"/>
</dbReference>
<dbReference type="InterPro" id="IPR006847">
    <property type="entry name" value="IF2_N"/>
</dbReference>
<dbReference type="InterPro" id="IPR027417">
    <property type="entry name" value="P-loop_NTPase"/>
</dbReference>
<dbReference type="InterPro" id="IPR005225">
    <property type="entry name" value="Small_GTP-bd"/>
</dbReference>
<dbReference type="InterPro" id="IPR000795">
    <property type="entry name" value="T_Tr_GTP-bd_dom"/>
</dbReference>
<dbReference type="InterPro" id="IPR000178">
    <property type="entry name" value="TF_IF2_bacterial-like"/>
</dbReference>
<dbReference type="InterPro" id="IPR015760">
    <property type="entry name" value="TIF_IF2"/>
</dbReference>
<dbReference type="InterPro" id="IPR023115">
    <property type="entry name" value="TIF_IF2_dom3"/>
</dbReference>
<dbReference type="InterPro" id="IPR036925">
    <property type="entry name" value="TIF_IF2_dom3_sf"/>
</dbReference>
<dbReference type="InterPro" id="IPR009000">
    <property type="entry name" value="Transl_B-barrel_sf"/>
</dbReference>
<dbReference type="NCBIfam" id="TIGR00487">
    <property type="entry name" value="IF-2"/>
    <property type="match status" value="1"/>
</dbReference>
<dbReference type="NCBIfam" id="TIGR00231">
    <property type="entry name" value="small_GTP"/>
    <property type="match status" value="1"/>
</dbReference>
<dbReference type="PANTHER" id="PTHR43381:SF5">
    <property type="entry name" value="TR-TYPE G DOMAIN-CONTAINING PROTEIN"/>
    <property type="match status" value="1"/>
</dbReference>
<dbReference type="PANTHER" id="PTHR43381">
    <property type="entry name" value="TRANSLATION INITIATION FACTOR IF-2-RELATED"/>
    <property type="match status" value="1"/>
</dbReference>
<dbReference type="Pfam" id="PF22042">
    <property type="entry name" value="EF-G_D2"/>
    <property type="match status" value="1"/>
</dbReference>
<dbReference type="Pfam" id="PF00009">
    <property type="entry name" value="GTP_EFTU"/>
    <property type="match status" value="1"/>
</dbReference>
<dbReference type="Pfam" id="PF11987">
    <property type="entry name" value="IF-2"/>
    <property type="match status" value="1"/>
</dbReference>
<dbReference type="Pfam" id="PF04760">
    <property type="entry name" value="IF2_N"/>
    <property type="match status" value="1"/>
</dbReference>
<dbReference type="PRINTS" id="PR00315">
    <property type="entry name" value="ELONGATNFCT"/>
</dbReference>
<dbReference type="SUPFAM" id="SSF52156">
    <property type="entry name" value="Initiation factor IF2/eIF5b, domain 3"/>
    <property type="match status" value="1"/>
</dbReference>
<dbReference type="SUPFAM" id="SSF52540">
    <property type="entry name" value="P-loop containing nucleoside triphosphate hydrolases"/>
    <property type="match status" value="1"/>
</dbReference>
<dbReference type="SUPFAM" id="SSF50447">
    <property type="entry name" value="Translation proteins"/>
    <property type="match status" value="2"/>
</dbReference>
<dbReference type="PROSITE" id="PS51722">
    <property type="entry name" value="G_TR_2"/>
    <property type="match status" value="1"/>
</dbReference>
<accession>Q6KID8</accession>
<proteinExistence type="inferred from homology"/>
<keyword id="KW-0963">Cytoplasm</keyword>
<keyword id="KW-0342">GTP-binding</keyword>
<keyword id="KW-0396">Initiation factor</keyword>
<keyword id="KW-0547">Nucleotide-binding</keyword>
<keyword id="KW-0648">Protein biosynthesis</keyword>
<keyword id="KW-1185">Reference proteome</keyword>
<sequence>MAIKKAKRKSNVEEVKTQLLEIKTELKDGVFTFTGPMTINEFSKKIKKQAKDVILHFFKQGKMYNANQIINEEEIAELCLEFDYEFKKEEQITVSNFMDTLVLSDEAKDLEERAPIITVMGHVDHGKTTLIDVIRKSKIVDTEAGGITQHTGAYQIEYNGKKITFIDTPGHEAFTQMRSRGAKVTDIVILVVAADDGVMPQTKEAIDHAKSANVPIIVFVNKMDKPNKDIDRILSALSTLDVVSEEWSGDTQFIYGSALKNQGIDKLFDAINLQAEILELKANRNRDAIGTIIESHLDKGKGSVSVLIVQNGTLTPRDFIVAGSQYGRIRSIEDTNGNSLDAAYPGTPVIVTGLNYVPNAGDRFIALSDESFAKNIAEQKAFVDKQAELISRNTIVVQDGIKVLNIILKADVQGIAEAIKSKLLEIKNEEVKINVVRSSVGAITKSDILLAQASNAIIFGFNIRATGGIKTFAEESRVIVKTHTIIYELLDEVNELLNGLKAPKFKEVVTGEARIKKIFFYSKVGNIAGCEVISGKVTSGTKMRLIRNGITVHEGILDSLQREKNQAREVLKGFEFGTHIKKFNDIKEDDIIQTFEDVQI</sequence>
<protein>
    <recommendedName>
        <fullName evidence="2">Translation initiation factor IF-2</fullName>
    </recommendedName>
</protein>
<comment type="function">
    <text evidence="2">One of the essential components for the initiation of protein synthesis. Protects formylmethionyl-tRNA from spontaneous hydrolysis and promotes its binding to the 30S ribosomal subunits. Also involved in the hydrolysis of GTP during the formation of the 70S ribosomal complex.</text>
</comment>
<comment type="subcellular location">
    <subcellularLocation>
        <location evidence="2">Cytoplasm</location>
    </subcellularLocation>
</comment>
<comment type="similarity">
    <text evidence="2">Belongs to the TRAFAC class translation factor GTPase superfamily. Classic translation factor GTPase family. IF-2 subfamily.</text>
</comment>